<sequence length="1449" mass="168864">MSDQESASLREEKNEIINGMGSGAPSDEEEGEDVFDSSEEEEEDDEDEARKISEGFIVNDEDEDEDEDDENVADKKKKRRHKRRAREEEDDRLSEDDLDLLMENAGVKRPTTEGSSGGKLKRLKRVGDEVESGAADREQESSQEKESSRLNDFFSDDEDEEPYDEENRERSRGSREYDRGESNHQGDNRKSGMLDELDDFIEEDEFSDEDEETRQQRLLERKMMREQRMKAPTKITGLSSDKIDEMYDVFGDGHDYDWALEIENEELEGGDINEQSEEFDEETGMTKSSKKKISLQDIYDLQDLKKNLMTDEDMLIRKTDIPERYQELRSGLVNHGNLSDNDQELEKNWISEKIAVDKNFSADYDLTEFKEAVGNAIKFITKENLEVPFIYAYRRNYISSRERDGFLLTEDDLWEIVHLDIEFQSIINKRDYVKRFYSELGISDPLVDEYFKNQSTGSVAELNSLQDIYNYLEFKYAQEINDNLQKESDKSGKKHLKNSNYEKFKSSALYKVIEAVGVSADQIGNNISSQHQIHIPKDHEALKPLELIELVLNENAGDLQVFLSNIKLAMDTIQKYYSWEISKNTKVREKVRADFYRYYLVDVVLTTKGKREIQRGSLYEDIKYAINRTPLHFRREPEIFLKMLEAESLNLMTLKLHMSSQKQYVDHLFQIALETTNTSDLAIEWNNFRKAAFTQAIEKIFNDIAQEIKDDLEKTCQKLVCKVVRHKFMTKLDQAPYVPDLKDPKLPKILTLTCGQGRFGSDAIIAAYVNRKGEFVRDFKITENPFDRSNPDKFEEVFEDIVQTCQITAIGINGPNPKTQKLFKKLIEVIHKKNLVDSKGTHIPIIYVEDEIAIRYQNSERAAQEFPNKPPYVKYCIALARYMHSPLMEYANLSPEELKSLSIHPFQSFLSPEYLNRAIETAFVDIVNLVGVEVNKATDNSYYASVLRFVSGFGKRKAIDFLESLQRLNEPLLARQQLITHNILHKVIFMNSAGFLYISWSKKRQRYEDLEHDQLDSTRIHPEDYHLATKVAADALEYDPDTIAEKEENGTMSEFIEFLREDPNRRSKLESLNLESYAEELEKNTGQRKLNNLNTIVLELLDGFEELRNDFHIMQSEEVFSSLTGETDKTLFKGCVIPVRVERFWHNDIVCVTNSEVECIVNAQRHLGAQVRRPPNEIYELNKTYPAKVIFIDYPNITAEVSLLEHDVKNEYNPLTYSKDPAIWDLKQELEDSEEEKKVTMAESRAKRTHRVINHPYYFPFNGKQAEDYLRSKERGDFVIRQSSRGDDHLAITWKLDKDLFQHVDIQELEKENPLALGKVLVVEGQRYHDLDQIIVEYLQNKIRLLNELTSNEKFKAGTKKEVVKFIEDYSKVNPKKSVYYFSLNYENPGWFYLIFKLNAESKLYIWNVKLTHTGFFLVNYNYPTVIQLCNGFKTLLKSSNTRNRSGYR</sequence>
<feature type="chain" id="PRO_0000238572" description="Transcription elongation factor SPT6">
    <location>
        <begin position="1"/>
        <end position="1449"/>
    </location>
</feature>
<feature type="domain" description="SH2" evidence="2">
    <location>
        <begin position="1256"/>
        <end position="1353"/>
    </location>
</feature>
<feature type="region of interest" description="Disordered" evidence="3">
    <location>
        <begin position="1"/>
        <end position="214"/>
    </location>
</feature>
<feature type="compositionally biased region" description="Acidic residues" evidence="3">
    <location>
        <begin position="26"/>
        <end position="47"/>
    </location>
</feature>
<feature type="compositionally biased region" description="Acidic residues" evidence="3">
    <location>
        <begin position="59"/>
        <end position="71"/>
    </location>
</feature>
<feature type="compositionally biased region" description="Basic residues" evidence="3">
    <location>
        <begin position="75"/>
        <end position="84"/>
    </location>
</feature>
<feature type="compositionally biased region" description="Acidic residues" evidence="3">
    <location>
        <begin position="88"/>
        <end position="100"/>
    </location>
</feature>
<feature type="compositionally biased region" description="Basic and acidic residues" evidence="3">
    <location>
        <begin position="134"/>
        <end position="149"/>
    </location>
</feature>
<feature type="compositionally biased region" description="Acidic residues" evidence="3">
    <location>
        <begin position="154"/>
        <end position="164"/>
    </location>
</feature>
<feature type="compositionally biased region" description="Basic and acidic residues" evidence="3">
    <location>
        <begin position="165"/>
        <end position="193"/>
    </location>
</feature>
<feature type="compositionally biased region" description="Acidic residues" evidence="3">
    <location>
        <begin position="195"/>
        <end position="212"/>
    </location>
</feature>
<feature type="helix" evidence="5">
    <location>
        <begin position="1252"/>
        <end position="1254"/>
    </location>
</feature>
<feature type="helix" evidence="7">
    <location>
        <begin position="1263"/>
        <end position="1270"/>
    </location>
</feature>
<feature type="strand" evidence="7">
    <location>
        <begin position="1278"/>
        <end position="1282"/>
    </location>
</feature>
<feature type="strand" evidence="6">
    <location>
        <begin position="1284"/>
        <end position="1287"/>
    </location>
</feature>
<feature type="strand" evidence="7">
    <location>
        <begin position="1289"/>
        <end position="1297"/>
    </location>
</feature>
<feature type="strand" evidence="7">
    <location>
        <begin position="1300"/>
        <end position="1310"/>
    </location>
</feature>
<feature type="strand" evidence="7">
    <location>
        <begin position="1319"/>
        <end position="1323"/>
    </location>
</feature>
<feature type="strand" evidence="7">
    <location>
        <begin position="1326"/>
        <end position="1330"/>
    </location>
</feature>
<feature type="helix" evidence="7">
    <location>
        <begin position="1331"/>
        <end position="1337"/>
    </location>
</feature>
<feature type="helix" evidence="7">
    <location>
        <begin position="1339"/>
        <end position="1350"/>
    </location>
</feature>
<feature type="helix" evidence="7">
    <location>
        <begin position="1360"/>
        <end position="1373"/>
    </location>
</feature>
<feature type="strand" evidence="7">
    <location>
        <begin position="1379"/>
        <end position="1384"/>
    </location>
</feature>
<feature type="strand" evidence="8">
    <location>
        <begin position="1386"/>
        <end position="1388"/>
    </location>
</feature>
<feature type="strand" evidence="7">
    <location>
        <begin position="1391"/>
        <end position="1399"/>
    </location>
</feature>
<feature type="strand" evidence="7">
    <location>
        <begin position="1404"/>
        <end position="1411"/>
    </location>
</feature>
<feature type="strand" evidence="7">
    <location>
        <begin position="1413"/>
        <end position="1418"/>
    </location>
</feature>
<feature type="strand" evidence="7">
    <location>
        <begin position="1421"/>
        <end position="1425"/>
    </location>
</feature>
<feature type="helix" evidence="7">
    <location>
        <begin position="1426"/>
        <end position="1436"/>
    </location>
</feature>
<feature type="helix" evidence="7">
    <location>
        <begin position="1440"/>
        <end position="1442"/>
    </location>
</feature>
<name>SPT6_CANGA</name>
<proteinExistence type="evidence at protein level"/>
<comment type="function">
    <text evidence="1">Histone H3-H4 chaperone that plays a role in maintenance of chromatin structure during RNA polymerase II transcription elongation thereby repressing transcription initiation from cryptic promoters. Mediates the reassembly of nucleosomes onto the promoters of at least a selected set of genes during repression; the nucleosome reassembly is essential for transcriptional repression. Essential for viability.</text>
</comment>
<comment type="subcellular location">
    <subcellularLocation>
        <location evidence="1">Nucleus</location>
    </subcellularLocation>
    <subcellularLocation>
        <location evidence="1">Chromosome</location>
    </subcellularLocation>
</comment>
<comment type="similarity">
    <text evidence="4">Belongs to the SPT6 family.</text>
</comment>
<gene>
    <name type="primary">SPT6</name>
    <name type="ordered locus">CAGL0L04774g</name>
</gene>
<evidence type="ECO:0000250" key="1">
    <source>
        <dbReference type="UniProtKB" id="P23615"/>
    </source>
</evidence>
<evidence type="ECO:0000255" key="2">
    <source>
        <dbReference type="PROSITE-ProRule" id="PRU00191"/>
    </source>
</evidence>
<evidence type="ECO:0000256" key="3">
    <source>
        <dbReference type="SAM" id="MobiDB-lite"/>
    </source>
</evidence>
<evidence type="ECO:0000305" key="4"/>
<evidence type="ECO:0007829" key="5">
    <source>
        <dbReference type="PDB" id="3GXW"/>
    </source>
</evidence>
<evidence type="ECO:0007829" key="6">
    <source>
        <dbReference type="PDB" id="3GXX"/>
    </source>
</evidence>
<evidence type="ECO:0007829" key="7">
    <source>
        <dbReference type="PDB" id="3PJP"/>
    </source>
</evidence>
<evidence type="ECO:0007829" key="8">
    <source>
        <dbReference type="PDB" id="6QTC"/>
    </source>
</evidence>
<accession>Q6FLB1</accession>
<dbReference type="EMBL" id="CR380958">
    <property type="protein sequence ID" value="CAG61953.1"/>
    <property type="molecule type" value="Genomic_DNA"/>
</dbReference>
<dbReference type="RefSeq" id="XP_448983.1">
    <property type="nucleotide sequence ID" value="XM_448983.1"/>
</dbReference>
<dbReference type="PDB" id="3GXW">
    <property type="method" value="X-ray"/>
    <property type="resolution" value="1.90 A"/>
    <property type="chains" value="A/B/C/D=1250-1348"/>
</dbReference>
<dbReference type="PDB" id="3GXX">
    <property type="method" value="X-ray"/>
    <property type="resolution" value="2.40 A"/>
    <property type="chains" value="A/B/C/D=1250-1348"/>
</dbReference>
<dbReference type="PDB" id="3PJP">
    <property type="method" value="X-ray"/>
    <property type="resolution" value="1.60 A"/>
    <property type="chains" value="A/B=1250-1444"/>
</dbReference>
<dbReference type="PDB" id="6QTC">
    <property type="method" value="NMR"/>
    <property type="chains" value="A=1249-1444"/>
</dbReference>
<dbReference type="PDBsum" id="3GXW"/>
<dbReference type="PDBsum" id="3GXX"/>
<dbReference type="PDBsum" id="3PJP"/>
<dbReference type="PDBsum" id="6QTC"/>
<dbReference type="BMRB" id="Q6FLB1"/>
<dbReference type="SMR" id="Q6FLB1"/>
<dbReference type="FunCoup" id="Q6FLB1">
    <property type="interactions" value="1330"/>
</dbReference>
<dbReference type="STRING" id="284593.Q6FLB1"/>
<dbReference type="EnsemblFungi" id="CAGL0L04774g-T">
    <property type="protein sequence ID" value="CAGL0L04774g-T-p1"/>
    <property type="gene ID" value="CAGL0L04774g"/>
</dbReference>
<dbReference type="KEGG" id="cgr:2890706"/>
<dbReference type="CGD" id="CAL0135088">
    <property type="gene designation" value="CAGL0L04774g"/>
</dbReference>
<dbReference type="VEuPathDB" id="FungiDB:CAGL0L04774g"/>
<dbReference type="eggNOG" id="KOG1856">
    <property type="taxonomic scope" value="Eukaryota"/>
</dbReference>
<dbReference type="HOGENOM" id="CLU_001680_0_1_1"/>
<dbReference type="InParanoid" id="Q6FLB1"/>
<dbReference type="OMA" id="GYFYLCF"/>
<dbReference type="EvolutionaryTrace" id="Q6FLB1"/>
<dbReference type="Proteomes" id="UP000002428">
    <property type="component" value="Chromosome L"/>
</dbReference>
<dbReference type="GO" id="GO:0000791">
    <property type="term" value="C:euchromatin"/>
    <property type="evidence" value="ECO:0007669"/>
    <property type="project" value="EnsemblFungi"/>
</dbReference>
<dbReference type="GO" id="GO:0008023">
    <property type="term" value="C:transcription elongation factor complex"/>
    <property type="evidence" value="ECO:0007669"/>
    <property type="project" value="TreeGrafter"/>
</dbReference>
<dbReference type="GO" id="GO:0003677">
    <property type="term" value="F:DNA binding"/>
    <property type="evidence" value="ECO:0007669"/>
    <property type="project" value="InterPro"/>
</dbReference>
<dbReference type="GO" id="GO:0042393">
    <property type="term" value="F:histone binding"/>
    <property type="evidence" value="ECO:0007669"/>
    <property type="project" value="EnsemblFungi"/>
</dbReference>
<dbReference type="GO" id="GO:0031491">
    <property type="term" value="F:nucleosome binding"/>
    <property type="evidence" value="ECO:0007669"/>
    <property type="project" value="EnsemblFungi"/>
</dbReference>
<dbReference type="GO" id="GO:0001073">
    <property type="term" value="F:transcription antitermination factor activity, DNA binding"/>
    <property type="evidence" value="ECO:0007669"/>
    <property type="project" value="EnsemblFungi"/>
</dbReference>
<dbReference type="GO" id="GO:0033554">
    <property type="term" value="P:cellular response to stress"/>
    <property type="evidence" value="ECO:0007669"/>
    <property type="project" value="EnsemblFungi"/>
</dbReference>
<dbReference type="GO" id="GO:0000082">
    <property type="term" value="P:G1/S transition of mitotic cell cycle"/>
    <property type="evidence" value="ECO:0007669"/>
    <property type="project" value="EnsemblFungi"/>
</dbReference>
<dbReference type="GO" id="GO:0000122">
    <property type="term" value="P:negative regulation of transcription by RNA polymerase II"/>
    <property type="evidence" value="ECO:0007669"/>
    <property type="project" value="EnsemblFungi"/>
</dbReference>
<dbReference type="GO" id="GO:0006334">
    <property type="term" value="P:nucleosome assembly"/>
    <property type="evidence" value="ECO:0007669"/>
    <property type="project" value="EnsemblFungi"/>
</dbReference>
<dbReference type="GO" id="GO:0016973">
    <property type="term" value="P:poly(A)+ mRNA export from nucleus"/>
    <property type="evidence" value="ECO:0007669"/>
    <property type="project" value="EnsemblFungi"/>
</dbReference>
<dbReference type="GO" id="GO:0032968">
    <property type="term" value="P:positive regulation of transcription elongation by RNA polymerase II"/>
    <property type="evidence" value="ECO:0007669"/>
    <property type="project" value="EnsemblFungi"/>
</dbReference>
<dbReference type="GO" id="GO:0031440">
    <property type="term" value="P:regulation of mRNA 3'-end processing"/>
    <property type="evidence" value="ECO:0007669"/>
    <property type="project" value="EnsemblFungi"/>
</dbReference>
<dbReference type="GO" id="GO:0140673">
    <property type="term" value="P:transcription elongation-coupled chromatin remodeling"/>
    <property type="evidence" value="ECO:0007669"/>
    <property type="project" value="InterPro"/>
</dbReference>
<dbReference type="CDD" id="cd09928">
    <property type="entry name" value="SH2_Cterm_SPT6_like"/>
    <property type="match status" value="1"/>
</dbReference>
<dbReference type="CDD" id="cd09918">
    <property type="entry name" value="SH2_Nterm_SPT6_like"/>
    <property type="match status" value="1"/>
</dbReference>
<dbReference type="FunFam" id="3.30.505.10:FF:000065">
    <property type="entry name" value="Transcription elongation factor SPT6"/>
    <property type="match status" value="1"/>
</dbReference>
<dbReference type="FunFam" id="1.10.10.2740:FF:000002">
    <property type="entry name" value="Transcription elongation factor Spt6"/>
    <property type="match status" value="1"/>
</dbReference>
<dbReference type="FunFam" id="1.10.10.650:FF:000007">
    <property type="entry name" value="Transcription elongation factor Spt6"/>
    <property type="match status" value="1"/>
</dbReference>
<dbReference type="FunFam" id="3.30.505.10:FF:000056">
    <property type="entry name" value="Transcription elongation factor Spt6"/>
    <property type="match status" value="1"/>
</dbReference>
<dbReference type="Gene3D" id="1.10.10.650">
    <property type="entry name" value="RuvA domain 2-like"/>
    <property type="match status" value="1"/>
</dbReference>
<dbReference type="Gene3D" id="3.30.505.10">
    <property type="entry name" value="SH2 domain"/>
    <property type="match status" value="2"/>
</dbReference>
<dbReference type="Gene3D" id="1.10.10.2740">
    <property type="entry name" value="Spt6, Death-like domain"/>
    <property type="match status" value="1"/>
</dbReference>
<dbReference type="Gene3D" id="1.10.150.850">
    <property type="entry name" value="Spt6, helix-hairpin-helix domain"/>
    <property type="match status" value="1"/>
</dbReference>
<dbReference type="Gene3D" id="1.10.3500.10">
    <property type="entry name" value="Tex N-terminal region-like"/>
    <property type="match status" value="1"/>
</dbReference>
<dbReference type="Gene3D" id="3.30.420.140">
    <property type="entry name" value="YqgF/RNase H-like domain"/>
    <property type="match status" value="1"/>
</dbReference>
<dbReference type="InterPro" id="IPR012337">
    <property type="entry name" value="RNaseH-like_sf"/>
</dbReference>
<dbReference type="InterPro" id="IPR010994">
    <property type="entry name" value="RuvA_2-like"/>
</dbReference>
<dbReference type="InterPro" id="IPR000980">
    <property type="entry name" value="SH2"/>
</dbReference>
<dbReference type="InterPro" id="IPR036860">
    <property type="entry name" value="SH2_dom_sf"/>
</dbReference>
<dbReference type="InterPro" id="IPR049540">
    <property type="entry name" value="Spt6-like_S1"/>
</dbReference>
<dbReference type="InterPro" id="IPR028083">
    <property type="entry name" value="Spt6_acidic_N_dom"/>
</dbReference>
<dbReference type="InterPro" id="IPR042066">
    <property type="entry name" value="Spt6_death-like"/>
</dbReference>
<dbReference type="InterPro" id="IPR032706">
    <property type="entry name" value="Spt6_HHH"/>
</dbReference>
<dbReference type="InterPro" id="IPR028088">
    <property type="entry name" value="Spt6_HTH_DNA-bd_dom"/>
</dbReference>
<dbReference type="InterPro" id="IPR035420">
    <property type="entry name" value="Spt6_SH2"/>
</dbReference>
<dbReference type="InterPro" id="IPR035018">
    <property type="entry name" value="Spt6_SH2_C"/>
</dbReference>
<dbReference type="InterPro" id="IPR035019">
    <property type="entry name" value="Spt6_SH2_N"/>
</dbReference>
<dbReference type="InterPro" id="IPR028231">
    <property type="entry name" value="Spt6_YqgF"/>
</dbReference>
<dbReference type="InterPro" id="IPR055179">
    <property type="entry name" value="Tex-like_central_region"/>
</dbReference>
<dbReference type="InterPro" id="IPR023323">
    <property type="entry name" value="Tex-like_dom_sf"/>
</dbReference>
<dbReference type="InterPro" id="IPR023319">
    <property type="entry name" value="Tex-like_HTH_dom_sf"/>
</dbReference>
<dbReference type="InterPro" id="IPR017072">
    <property type="entry name" value="TF_Spt6"/>
</dbReference>
<dbReference type="InterPro" id="IPR006641">
    <property type="entry name" value="YqgF/RNaseH-like_dom"/>
</dbReference>
<dbReference type="InterPro" id="IPR037027">
    <property type="entry name" value="YqgF/RNaseH-like_dom_sf"/>
</dbReference>
<dbReference type="PANTHER" id="PTHR10145">
    <property type="entry name" value="TRANSCRIPTION ELONGATION FACTOR SPT6"/>
    <property type="match status" value="1"/>
</dbReference>
<dbReference type="PANTHER" id="PTHR10145:SF6">
    <property type="entry name" value="TRANSCRIPTION ELONGATION FACTOR SPT6"/>
    <property type="match status" value="1"/>
</dbReference>
<dbReference type="Pfam" id="PF14635">
    <property type="entry name" value="HHH_7"/>
    <property type="match status" value="1"/>
</dbReference>
<dbReference type="Pfam" id="PF14641">
    <property type="entry name" value="HTH_44"/>
    <property type="match status" value="1"/>
</dbReference>
<dbReference type="Pfam" id="PF14633">
    <property type="entry name" value="SH2_2"/>
    <property type="match status" value="1"/>
</dbReference>
<dbReference type="Pfam" id="PF14632">
    <property type="entry name" value="SPT6_acidic"/>
    <property type="match status" value="1"/>
</dbReference>
<dbReference type="Pfam" id="PF21710">
    <property type="entry name" value="Spt6_S1"/>
    <property type="match status" value="1"/>
</dbReference>
<dbReference type="Pfam" id="PF22706">
    <property type="entry name" value="Tex_central_region"/>
    <property type="match status" value="1"/>
</dbReference>
<dbReference type="Pfam" id="PF14639">
    <property type="entry name" value="YqgF"/>
    <property type="match status" value="1"/>
</dbReference>
<dbReference type="PIRSF" id="PIRSF036947">
    <property type="entry name" value="Spt6"/>
    <property type="match status" value="1"/>
</dbReference>
<dbReference type="SMART" id="SM00252">
    <property type="entry name" value="SH2"/>
    <property type="match status" value="1"/>
</dbReference>
<dbReference type="SMART" id="SM00732">
    <property type="entry name" value="YqgFc"/>
    <property type="match status" value="1"/>
</dbReference>
<dbReference type="SUPFAM" id="SSF53098">
    <property type="entry name" value="Ribonuclease H-like"/>
    <property type="match status" value="1"/>
</dbReference>
<dbReference type="SUPFAM" id="SSF47781">
    <property type="entry name" value="RuvA domain 2-like"/>
    <property type="match status" value="1"/>
</dbReference>
<dbReference type="SUPFAM" id="SSF55550">
    <property type="entry name" value="SH2 domain"/>
    <property type="match status" value="1"/>
</dbReference>
<dbReference type="SUPFAM" id="SSF158832">
    <property type="entry name" value="Tex N-terminal region-like"/>
    <property type="match status" value="1"/>
</dbReference>
<dbReference type="PROSITE" id="PS50001">
    <property type="entry name" value="SH2"/>
    <property type="match status" value="1"/>
</dbReference>
<protein>
    <recommendedName>
        <fullName>Transcription elongation factor SPT6</fullName>
    </recommendedName>
    <alternativeName>
        <fullName>Chromatin elongation factor SPT6</fullName>
    </alternativeName>
</protein>
<reference key="1">
    <citation type="journal article" date="2004" name="Nature">
        <title>Genome evolution in yeasts.</title>
        <authorList>
            <person name="Dujon B."/>
            <person name="Sherman D."/>
            <person name="Fischer G."/>
            <person name="Durrens P."/>
            <person name="Casaregola S."/>
            <person name="Lafontaine I."/>
            <person name="de Montigny J."/>
            <person name="Marck C."/>
            <person name="Neuveglise C."/>
            <person name="Talla E."/>
            <person name="Goffard N."/>
            <person name="Frangeul L."/>
            <person name="Aigle M."/>
            <person name="Anthouard V."/>
            <person name="Babour A."/>
            <person name="Barbe V."/>
            <person name="Barnay S."/>
            <person name="Blanchin S."/>
            <person name="Beckerich J.-M."/>
            <person name="Beyne E."/>
            <person name="Bleykasten C."/>
            <person name="Boisrame A."/>
            <person name="Boyer J."/>
            <person name="Cattolico L."/>
            <person name="Confanioleri F."/>
            <person name="de Daruvar A."/>
            <person name="Despons L."/>
            <person name="Fabre E."/>
            <person name="Fairhead C."/>
            <person name="Ferry-Dumazet H."/>
            <person name="Groppi A."/>
            <person name="Hantraye F."/>
            <person name="Hennequin C."/>
            <person name="Jauniaux N."/>
            <person name="Joyet P."/>
            <person name="Kachouri R."/>
            <person name="Kerrest A."/>
            <person name="Koszul R."/>
            <person name="Lemaire M."/>
            <person name="Lesur I."/>
            <person name="Ma L."/>
            <person name="Muller H."/>
            <person name="Nicaud J.-M."/>
            <person name="Nikolski M."/>
            <person name="Oztas S."/>
            <person name="Ozier-Kalogeropoulos O."/>
            <person name="Pellenz S."/>
            <person name="Potier S."/>
            <person name="Richard G.-F."/>
            <person name="Straub M.-L."/>
            <person name="Suleau A."/>
            <person name="Swennen D."/>
            <person name="Tekaia F."/>
            <person name="Wesolowski-Louvel M."/>
            <person name="Westhof E."/>
            <person name="Wirth B."/>
            <person name="Zeniou-Meyer M."/>
            <person name="Zivanovic Y."/>
            <person name="Bolotin-Fukuhara M."/>
            <person name="Thierry A."/>
            <person name="Bouchier C."/>
            <person name="Caudron B."/>
            <person name="Scarpelli C."/>
            <person name="Gaillardin C."/>
            <person name="Weissenbach J."/>
            <person name="Wincker P."/>
            <person name="Souciet J.-L."/>
        </authorList>
    </citation>
    <scope>NUCLEOTIDE SEQUENCE [LARGE SCALE GENOMIC DNA]</scope>
    <source>
        <strain>ATCC 2001 / BCRC 20586 / JCM 3761 / NBRC 0622 / NRRL Y-65 / CBS 138</strain>
    </source>
</reference>
<organism>
    <name type="scientific">Candida glabrata (strain ATCC 2001 / BCRC 20586 / JCM 3761 / NBRC 0622 / NRRL Y-65 / CBS 138)</name>
    <name type="common">Yeast</name>
    <name type="synonym">Nakaseomyces glabratus</name>
    <dbReference type="NCBI Taxonomy" id="284593"/>
    <lineage>
        <taxon>Eukaryota</taxon>
        <taxon>Fungi</taxon>
        <taxon>Dikarya</taxon>
        <taxon>Ascomycota</taxon>
        <taxon>Saccharomycotina</taxon>
        <taxon>Saccharomycetes</taxon>
        <taxon>Saccharomycetales</taxon>
        <taxon>Saccharomycetaceae</taxon>
        <taxon>Nakaseomyces</taxon>
    </lineage>
</organism>
<keyword id="KW-0002">3D-structure</keyword>
<keyword id="KW-0158">Chromosome</keyword>
<keyword id="KW-0539">Nucleus</keyword>
<keyword id="KW-1185">Reference proteome</keyword>
<keyword id="KW-0727">SH2 domain</keyword>
<keyword id="KW-0804">Transcription</keyword>